<feature type="chain" id="PRO_1000013916" description="Ubiquinone biosynthesis O-methyltransferase">
    <location>
        <begin position="1"/>
        <end position="251"/>
    </location>
</feature>
<feature type="binding site" evidence="1">
    <location>
        <position position="36"/>
    </location>
    <ligand>
        <name>S-adenosyl-L-methionine</name>
        <dbReference type="ChEBI" id="CHEBI:59789"/>
    </ligand>
</feature>
<feature type="binding site" evidence="1">
    <location>
        <position position="61"/>
    </location>
    <ligand>
        <name>S-adenosyl-L-methionine</name>
        <dbReference type="ChEBI" id="CHEBI:59789"/>
    </ligand>
</feature>
<feature type="binding site" evidence="1">
    <location>
        <position position="82"/>
    </location>
    <ligand>
        <name>S-adenosyl-L-methionine</name>
        <dbReference type="ChEBI" id="CHEBI:59789"/>
    </ligand>
</feature>
<feature type="binding site" evidence="1">
    <location>
        <position position="124"/>
    </location>
    <ligand>
        <name>S-adenosyl-L-methionine</name>
        <dbReference type="ChEBI" id="CHEBI:59789"/>
    </ligand>
</feature>
<proteinExistence type="inferred from homology"/>
<comment type="function">
    <text evidence="1">O-methyltransferase that catalyzes the 2 O-methylation steps in the ubiquinone biosynthetic pathway.</text>
</comment>
<comment type="catalytic activity">
    <reaction evidence="1">
        <text>a 3-demethylubiquinol + S-adenosyl-L-methionine = a ubiquinol + S-adenosyl-L-homocysteine + H(+)</text>
        <dbReference type="Rhea" id="RHEA:44380"/>
        <dbReference type="Rhea" id="RHEA-COMP:9566"/>
        <dbReference type="Rhea" id="RHEA-COMP:10914"/>
        <dbReference type="ChEBI" id="CHEBI:15378"/>
        <dbReference type="ChEBI" id="CHEBI:17976"/>
        <dbReference type="ChEBI" id="CHEBI:57856"/>
        <dbReference type="ChEBI" id="CHEBI:59789"/>
        <dbReference type="ChEBI" id="CHEBI:84422"/>
        <dbReference type="EC" id="2.1.1.64"/>
    </reaction>
</comment>
<comment type="catalytic activity">
    <reaction evidence="1">
        <text>a 3-(all-trans-polyprenyl)benzene-1,2-diol + S-adenosyl-L-methionine = a 2-methoxy-6-(all-trans-polyprenyl)phenol + S-adenosyl-L-homocysteine + H(+)</text>
        <dbReference type="Rhea" id="RHEA:31411"/>
        <dbReference type="Rhea" id="RHEA-COMP:9550"/>
        <dbReference type="Rhea" id="RHEA-COMP:9551"/>
        <dbReference type="ChEBI" id="CHEBI:15378"/>
        <dbReference type="ChEBI" id="CHEBI:57856"/>
        <dbReference type="ChEBI" id="CHEBI:59789"/>
        <dbReference type="ChEBI" id="CHEBI:62729"/>
        <dbReference type="ChEBI" id="CHEBI:62731"/>
        <dbReference type="EC" id="2.1.1.222"/>
    </reaction>
</comment>
<comment type="pathway">
    <text evidence="1">Cofactor biosynthesis; ubiquinone biosynthesis.</text>
</comment>
<comment type="similarity">
    <text evidence="1">Belongs to the methyltransferase superfamily. UbiG/COQ3 family.</text>
</comment>
<name>UBIG_RICAH</name>
<evidence type="ECO:0000255" key="1">
    <source>
        <dbReference type="HAMAP-Rule" id="MF_00472"/>
    </source>
</evidence>
<sequence>MSSIDKKELAKFEKISHNWWNKDGEFGLLHRINPIRLEYIIEKITAHYNRHLSKLEILDVGCGGGLIAMPLAAQGFNVTAIDALQSNIETASTYAKENNVKINYLQSTIEELESDKLYDVVICIEVIEHVGNVQQFILNLVKHIKPNGMAIISTINRTKKAYALGIIVAEYILGWVPKNTHDYTKFLKPSEIYEMLTDTDIEIKELKGLVYDPAKNEWKLSDDIDVNYFMCLGSKNAKSINVIPALAGMTS</sequence>
<dbReference type="EC" id="2.1.1.222" evidence="1"/>
<dbReference type="EC" id="2.1.1.64" evidence="1"/>
<dbReference type="EMBL" id="CP000847">
    <property type="protein sequence ID" value="ABV75236.1"/>
    <property type="molecule type" value="Genomic_DNA"/>
</dbReference>
<dbReference type="RefSeq" id="WP_012149866.1">
    <property type="nucleotide sequence ID" value="NC_009881.1"/>
</dbReference>
<dbReference type="SMR" id="A8GPB1"/>
<dbReference type="STRING" id="293614.A1C_04890"/>
<dbReference type="KEGG" id="rak:A1C_04890"/>
<dbReference type="eggNOG" id="COG2227">
    <property type="taxonomic scope" value="Bacteria"/>
</dbReference>
<dbReference type="HOGENOM" id="CLU_042432_0_0_5"/>
<dbReference type="UniPathway" id="UPA00232"/>
<dbReference type="Proteomes" id="UP000006830">
    <property type="component" value="Chromosome"/>
</dbReference>
<dbReference type="GO" id="GO:0102208">
    <property type="term" value="F:2-polyprenyl-6-hydroxyphenol methylase activity"/>
    <property type="evidence" value="ECO:0007669"/>
    <property type="project" value="UniProtKB-EC"/>
</dbReference>
<dbReference type="GO" id="GO:0061542">
    <property type="term" value="F:3-demethylubiquinol 3-O-methyltransferase activity"/>
    <property type="evidence" value="ECO:0007669"/>
    <property type="project" value="UniProtKB-UniRule"/>
</dbReference>
<dbReference type="GO" id="GO:0010420">
    <property type="term" value="F:polyprenyldihydroxybenzoate methyltransferase activity"/>
    <property type="evidence" value="ECO:0007669"/>
    <property type="project" value="InterPro"/>
</dbReference>
<dbReference type="GO" id="GO:0032259">
    <property type="term" value="P:methylation"/>
    <property type="evidence" value="ECO:0007669"/>
    <property type="project" value="UniProtKB-KW"/>
</dbReference>
<dbReference type="CDD" id="cd02440">
    <property type="entry name" value="AdoMet_MTases"/>
    <property type="match status" value="1"/>
</dbReference>
<dbReference type="Gene3D" id="3.40.50.150">
    <property type="entry name" value="Vaccinia Virus protein VP39"/>
    <property type="match status" value="1"/>
</dbReference>
<dbReference type="HAMAP" id="MF_00472">
    <property type="entry name" value="UbiG"/>
    <property type="match status" value="1"/>
</dbReference>
<dbReference type="InterPro" id="IPR029063">
    <property type="entry name" value="SAM-dependent_MTases_sf"/>
</dbReference>
<dbReference type="InterPro" id="IPR010233">
    <property type="entry name" value="UbiG_MeTrfase"/>
</dbReference>
<dbReference type="NCBIfam" id="TIGR01983">
    <property type="entry name" value="UbiG"/>
    <property type="match status" value="1"/>
</dbReference>
<dbReference type="PANTHER" id="PTHR43464">
    <property type="entry name" value="METHYLTRANSFERASE"/>
    <property type="match status" value="1"/>
</dbReference>
<dbReference type="PANTHER" id="PTHR43464:SF19">
    <property type="entry name" value="UBIQUINONE BIOSYNTHESIS O-METHYLTRANSFERASE, MITOCHONDRIAL"/>
    <property type="match status" value="1"/>
</dbReference>
<dbReference type="Pfam" id="PF13489">
    <property type="entry name" value="Methyltransf_23"/>
    <property type="match status" value="1"/>
</dbReference>
<dbReference type="SUPFAM" id="SSF53335">
    <property type="entry name" value="S-adenosyl-L-methionine-dependent methyltransferases"/>
    <property type="match status" value="1"/>
</dbReference>
<organism>
    <name type="scientific">Rickettsia akari (strain Hartford)</name>
    <dbReference type="NCBI Taxonomy" id="293614"/>
    <lineage>
        <taxon>Bacteria</taxon>
        <taxon>Pseudomonadati</taxon>
        <taxon>Pseudomonadota</taxon>
        <taxon>Alphaproteobacteria</taxon>
        <taxon>Rickettsiales</taxon>
        <taxon>Rickettsiaceae</taxon>
        <taxon>Rickettsieae</taxon>
        <taxon>Rickettsia</taxon>
        <taxon>spotted fever group</taxon>
    </lineage>
</organism>
<gene>
    <name evidence="1" type="primary">ubiG</name>
    <name type="ordered locus">A1C_04890</name>
</gene>
<accession>A8GPB1</accession>
<keyword id="KW-0489">Methyltransferase</keyword>
<keyword id="KW-0949">S-adenosyl-L-methionine</keyword>
<keyword id="KW-0808">Transferase</keyword>
<keyword id="KW-0831">Ubiquinone biosynthesis</keyword>
<reference key="1">
    <citation type="submission" date="2007-09" db="EMBL/GenBank/DDBJ databases">
        <title>Complete genome sequence of Rickettsia akari.</title>
        <authorList>
            <person name="Madan A."/>
            <person name="Fahey J."/>
            <person name="Helton E."/>
            <person name="Ketteman M."/>
            <person name="Madan A."/>
            <person name="Rodrigues S."/>
            <person name="Sanchez A."/>
            <person name="Whiting M."/>
            <person name="Dasch G."/>
            <person name="Eremeeva M."/>
        </authorList>
    </citation>
    <scope>NUCLEOTIDE SEQUENCE [LARGE SCALE GENOMIC DNA]</scope>
    <source>
        <strain>Hartford</strain>
    </source>
</reference>
<protein>
    <recommendedName>
        <fullName evidence="1">Ubiquinone biosynthesis O-methyltransferase</fullName>
    </recommendedName>
    <alternativeName>
        <fullName evidence="1">2-polyprenyl-6-hydroxyphenol methylase</fullName>
        <ecNumber evidence="1">2.1.1.222</ecNumber>
    </alternativeName>
    <alternativeName>
        <fullName evidence="1">3-demethylubiquinone 3-O-methyltransferase</fullName>
        <ecNumber evidence="1">2.1.1.64</ecNumber>
    </alternativeName>
</protein>